<evidence type="ECO:0000255" key="1">
    <source>
        <dbReference type="HAMAP-Rule" id="MF_00147"/>
    </source>
</evidence>
<proteinExistence type="inferred from homology"/>
<dbReference type="EC" id="5.3.1.1" evidence="1"/>
<dbReference type="EMBL" id="CP000095">
    <property type="protein sequence ID" value="AAZ57874.1"/>
    <property type="molecule type" value="Genomic_DNA"/>
</dbReference>
<dbReference type="RefSeq" id="WP_011293916.1">
    <property type="nucleotide sequence ID" value="NC_007335.2"/>
</dbReference>
<dbReference type="SMR" id="Q46KV4"/>
<dbReference type="STRING" id="59920.PMN2A_0382"/>
<dbReference type="KEGG" id="pmn:PMN2A_0382"/>
<dbReference type="HOGENOM" id="CLU_024251_2_3_3"/>
<dbReference type="OrthoDB" id="9809429at2"/>
<dbReference type="PhylomeDB" id="Q46KV4"/>
<dbReference type="UniPathway" id="UPA00109">
    <property type="reaction ID" value="UER00189"/>
</dbReference>
<dbReference type="UniPathway" id="UPA00138"/>
<dbReference type="Proteomes" id="UP000002535">
    <property type="component" value="Chromosome"/>
</dbReference>
<dbReference type="GO" id="GO:0005829">
    <property type="term" value="C:cytosol"/>
    <property type="evidence" value="ECO:0007669"/>
    <property type="project" value="TreeGrafter"/>
</dbReference>
<dbReference type="GO" id="GO:0004807">
    <property type="term" value="F:triose-phosphate isomerase activity"/>
    <property type="evidence" value="ECO:0007669"/>
    <property type="project" value="UniProtKB-UniRule"/>
</dbReference>
<dbReference type="GO" id="GO:0006094">
    <property type="term" value="P:gluconeogenesis"/>
    <property type="evidence" value="ECO:0007669"/>
    <property type="project" value="UniProtKB-UniRule"/>
</dbReference>
<dbReference type="GO" id="GO:0046166">
    <property type="term" value="P:glyceraldehyde-3-phosphate biosynthetic process"/>
    <property type="evidence" value="ECO:0007669"/>
    <property type="project" value="TreeGrafter"/>
</dbReference>
<dbReference type="GO" id="GO:0019563">
    <property type="term" value="P:glycerol catabolic process"/>
    <property type="evidence" value="ECO:0007669"/>
    <property type="project" value="TreeGrafter"/>
</dbReference>
<dbReference type="GO" id="GO:0006096">
    <property type="term" value="P:glycolytic process"/>
    <property type="evidence" value="ECO:0007669"/>
    <property type="project" value="UniProtKB-UniRule"/>
</dbReference>
<dbReference type="CDD" id="cd00311">
    <property type="entry name" value="TIM"/>
    <property type="match status" value="1"/>
</dbReference>
<dbReference type="FunFam" id="3.20.20.70:FF:000016">
    <property type="entry name" value="Triosephosphate isomerase"/>
    <property type="match status" value="1"/>
</dbReference>
<dbReference type="Gene3D" id="3.20.20.70">
    <property type="entry name" value="Aldolase class I"/>
    <property type="match status" value="1"/>
</dbReference>
<dbReference type="HAMAP" id="MF_00147_B">
    <property type="entry name" value="TIM_B"/>
    <property type="match status" value="1"/>
</dbReference>
<dbReference type="InterPro" id="IPR013785">
    <property type="entry name" value="Aldolase_TIM"/>
</dbReference>
<dbReference type="InterPro" id="IPR035990">
    <property type="entry name" value="TIM_sf"/>
</dbReference>
<dbReference type="InterPro" id="IPR022896">
    <property type="entry name" value="TrioseP_Isoase_bac/euk"/>
</dbReference>
<dbReference type="InterPro" id="IPR000652">
    <property type="entry name" value="Triosephosphate_isomerase"/>
</dbReference>
<dbReference type="InterPro" id="IPR020861">
    <property type="entry name" value="Triosephosphate_isomerase_AS"/>
</dbReference>
<dbReference type="NCBIfam" id="TIGR00419">
    <property type="entry name" value="tim"/>
    <property type="match status" value="1"/>
</dbReference>
<dbReference type="PANTHER" id="PTHR21139">
    <property type="entry name" value="TRIOSEPHOSPHATE ISOMERASE"/>
    <property type="match status" value="1"/>
</dbReference>
<dbReference type="PANTHER" id="PTHR21139:SF42">
    <property type="entry name" value="TRIOSEPHOSPHATE ISOMERASE"/>
    <property type="match status" value="1"/>
</dbReference>
<dbReference type="Pfam" id="PF00121">
    <property type="entry name" value="TIM"/>
    <property type="match status" value="1"/>
</dbReference>
<dbReference type="SUPFAM" id="SSF51351">
    <property type="entry name" value="Triosephosphate isomerase (TIM)"/>
    <property type="match status" value="1"/>
</dbReference>
<dbReference type="PROSITE" id="PS00171">
    <property type="entry name" value="TIM_1"/>
    <property type="match status" value="1"/>
</dbReference>
<dbReference type="PROSITE" id="PS51440">
    <property type="entry name" value="TIM_2"/>
    <property type="match status" value="1"/>
</dbReference>
<accession>Q46KV4</accession>
<reference key="1">
    <citation type="journal article" date="2007" name="PLoS Genet.">
        <title>Patterns and implications of gene gain and loss in the evolution of Prochlorococcus.</title>
        <authorList>
            <person name="Kettler G.C."/>
            <person name="Martiny A.C."/>
            <person name="Huang K."/>
            <person name="Zucker J."/>
            <person name="Coleman M.L."/>
            <person name="Rodrigue S."/>
            <person name="Chen F."/>
            <person name="Lapidus A."/>
            <person name="Ferriera S."/>
            <person name="Johnson J."/>
            <person name="Steglich C."/>
            <person name="Church G.M."/>
            <person name="Richardson P."/>
            <person name="Chisholm S.W."/>
        </authorList>
    </citation>
    <scope>NUCLEOTIDE SEQUENCE [LARGE SCALE GENOMIC DNA]</scope>
    <source>
        <strain>NATL2A</strain>
    </source>
</reference>
<name>TPIS_PROMT</name>
<protein>
    <recommendedName>
        <fullName evidence="1">Triosephosphate isomerase</fullName>
        <shortName evidence="1">TIM</shortName>
        <shortName evidence="1">TPI</shortName>
        <ecNumber evidence="1">5.3.1.1</ecNumber>
    </recommendedName>
    <alternativeName>
        <fullName evidence="1">Triose-phosphate isomerase</fullName>
    </alternativeName>
</protein>
<sequence>MRKPVIAGNWKMNMTCTEAIEYMRVLIPLLKDIPKKDREIVIAPPFTALYPLSEFIRDRNEYLSLSSQNVHWEDSGAYTAEVSPLMLNELSVKCAIVGHSEPRKYFSESDEQINKRAKSAQDHQLIPIVCVGETFQQREMGEAERVIRRQIEQGLEGIEVKRLIVAYEPIWAIGTGKTCEANEANRICGLIRKWIGYEDVIIQYGGSVKSNNIDEIMSMSDIDGVLVGGASLDPTNFARIANYEKI</sequence>
<feature type="chain" id="PRO_0000307529" description="Triosephosphate isomerase">
    <location>
        <begin position="1"/>
        <end position="246"/>
    </location>
</feature>
<feature type="active site" description="Electrophile" evidence="1">
    <location>
        <position position="99"/>
    </location>
</feature>
<feature type="active site" description="Proton acceptor" evidence="1">
    <location>
        <position position="168"/>
    </location>
</feature>
<feature type="binding site" evidence="1">
    <location>
        <begin position="9"/>
        <end position="11"/>
    </location>
    <ligand>
        <name>substrate</name>
    </ligand>
</feature>
<feature type="binding site" evidence="1">
    <location>
        <position position="174"/>
    </location>
    <ligand>
        <name>substrate</name>
    </ligand>
</feature>
<feature type="binding site" evidence="1">
    <location>
        <position position="207"/>
    </location>
    <ligand>
        <name>substrate</name>
    </ligand>
</feature>
<feature type="binding site" evidence="1">
    <location>
        <begin position="228"/>
        <end position="229"/>
    </location>
    <ligand>
        <name>substrate</name>
    </ligand>
</feature>
<comment type="function">
    <text evidence="1">Involved in the gluconeogenesis. Catalyzes stereospecifically the conversion of dihydroxyacetone phosphate (DHAP) to D-glyceraldehyde-3-phosphate (G3P).</text>
</comment>
<comment type="catalytic activity">
    <reaction evidence="1">
        <text>D-glyceraldehyde 3-phosphate = dihydroxyacetone phosphate</text>
        <dbReference type="Rhea" id="RHEA:18585"/>
        <dbReference type="ChEBI" id="CHEBI:57642"/>
        <dbReference type="ChEBI" id="CHEBI:59776"/>
        <dbReference type="EC" id="5.3.1.1"/>
    </reaction>
</comment>
<comment type="pathway">
    <text evidence="1">Carbohydrate biosynthesis; gluconeogenesis.</text>
</comment>
<comment type="pathway">
    <text evidence="1">Carbohydrate degradation; glycolysis; D-glyceraldehyde 3-phosphate from glycerone phosphate: step 1/1.</text>
</comment>
<comment type="subunit">
    <text evidence="1">Homodimer.</text>
</comment>
<comment type="subcellular location">
    <subcellularLocation>
        <location evidence="1">Cytoplasm</location>
    </subcellularLocation>
</comment>
<comment type="similarity">
    <text evidence="1">Belongs to the triosephosphate isomerase family.</text>
</comment>
<organism>
    <name type="scientific">Prochlorococcus marinus (strain NATL2A)</name>
    <dbReference type="NCBI Taxonomy" id="59920"/>
    <lineage>
        <taxon>Bacteria</taxon>
        <taxon>Bacillati</taxon>
        <taxon>Cyanobacteriota</taxon>
        <taxon>Cyanophyceae</taxon>
        <taxon>Synechococcales</taxon>
        <taxon>Prochlorococcaceae</taxon>
        <taxon>Prochlorococcus</taxon>
    </lineage>
</organism>
<keyword id="KW-0963">Cytoplasm</keyword>
<keyword id="KW-0312">Gluconeogenesis</keyword>
<keyword id="KW-0324">Glycolysis</keyword>
<keyword id="KW-0413">Isomerase</keyword>
<keyword id="KW-1185">Reference proteome</keyword>
<gene>
    <name evidence="1" type="primary">tpiA</name>
    <name type="ordered locus">PMN2A_0382</name>
</gene>